<evidence type="ECO:0000255" key="1">
    <source>
        <dbReference type="HAMAP-Rule" id="MF_01384"/>
    </source>
</evidence>
<reference key="1">
    <citation type="submission" date="2008-04" db="EMBL/GenBank/DDBJ databases">
        <title>Complete sequence of chromosome of Methylobacterium populi BJ001.</title>
        <authorList>
            <consortium name="US DOE Joint Genome Institute"/>
            <person name="Copeland A."/>
            <person name="Lucas S."/>
            <person name="Lapidus A."/>
            <person name="Glavina del Rio T."/>
            <person name="Dalin E."/>
            <person name="Tice H."/>
            <person name="Bruce D."/>
            <person name="Goodwin L."/>
            <person name="Pitluck S."/>
            <person name="Chertkov O."/>
            <person name="Brettin T."/>
            <person name="Detter J.C."/>
            <person name="Han C."/>
            <person name="Kuske C.R."/>
            <person name="Schmutz J."/>
            <person name="Larimer F."/>
            <person name="Land M."/>
            <person name="Hauser L."/>
            <person name="Kyrpides N."/>
            <person name="Mikhailova N."/>
            <person name="Marx C."/>
            <person name="Richardson P."/>
        </authorList>
    </citation>
    <scope>NUCLEOTIDE SEQUENCE [LARGE SCALE GENOMIC DNA]</scope>
    <source>
        <strain>ATCC BAA-705 / NCIMB 13946 / BJ001</strain>
    </source>
</reference>
<name>URED3_METPB</name>
<accession>B1Z8R4</accession>
<organism>
    <name type="scientific">Methylorubrum populi (strain ATCC BAA-705 / NCIMB 13946 / BJ001)</name>
    <name type="common">Methylobacterium populi</name>
    <dbReference type="NCBI Taxonomy" id="441620"/>
    <lineage>
        <taxon>Bacteria</taxon>
        <taxon>Pseudomonadati</taxon>
        <taxon>Pseudomonadota</taxon>
        <taxon>Alphaproteobacteria</taxon>
        <taxon>Hyphomicrobiales</taxon>
        <taxon>Methylobacteriaceae</taxon>
        <taxon>Methylorubrum</taxon>
    </lineage>
</organism>
<sequence>MTLHGPLGLLDTARELRGFRTEPAQMRAGAPGKVGRLRLGFSLRDGVSVLHDLYRVAPLLVQQALYWDEAMPDLPVCPIISVGGGILQGDRYTIDITVGEGACAHVSTQGANRIHCMDANYAAQHQNVTVEAGGYLEYLPDVTIPYRGSRFLSRTEIVVAEDATLLYGEMVLAGRKHHHAEERFGFDLLSMDVTLRRPGGRKLFAEKILIERGDPTIAFAAVMRGFDVFANILCVTPPGTAARIKERFETNFSSDAPRAVSGVSRLPNAAGLMLRAVGVETYDVRNEVRRFWRIVREEVRGRPLPAEPYWR</sequence>
<gene>
    <name evidence="1" type="primary">ureD3</name>
    <name type="ordered locus">Mpop_5120</name>
</gene>
<comment type="function">
    <text evidence="1">Required for maturation of urease via the functional incorporation of the urease nickel metallocenter.</text>
</comment>
<comment type="subunit">
    <text evidence="1">UreD, UreF and UreG form a complex that acts as a GTP-hydrolysis-dependent molecular chaperone, activating the urease apoprotein by helping to assemble the nickel containing metallocenter of UreC. The UreE protein probably delivers the nickel.</text>
</comment>
<comment type="subcellular location">
    <subcellularLocation>
        <location evidence="1">Cytoplasm</location>
    </subcellularLocation>
</comment>
<comment type="similarity">
    <text evidence="1">Belongs to the UreD family.</text>
</comment>
<feature type="chain" id="PRO_0000346577" description="Urease accessory protein UreD 3">
    <location>
        <begin position="1"/>
        <end position="311"/>
    </location>
</feature>
<dbReference type="EMBL" id="CP001029">
    <property type="protein sequence ID" value="ACB83216.1"/>
    <property type="molecule type" value="Genomic_DNA"/>
</dbReference>
<dbReference type="RefSeq" id="WP_012456812.1">
    <property type="nucleotide sequence ID" value="NC_010725.1"/>
</dbReference>
<dbReference type="SMR" id="B1Z8R4"/>
<dbReference type="STRING" id="441620.Mpop_5120"/>
<dbReference type="KEGG" id="mpo:Mpop_5120"/>
<dbReference type="eggNOG" id="COG0829">
    <property type="taxonomic scope" value="Bacteria"/>
</dbReference>
<dbReference type="HOGENOM" id="CLU_056339_1_0_5"/>
<dbReference type="OrthoDB" id="9807968at2"/>
<dbReference type="Proteomes" id="UP000007136">
    <property type="component" value="Chromosome"/>
</dbReference>
<dbReference type="GO" id="GO:0005737">
    <property type="term" value="C:cytoplasm"/>
    <property type="evidence" value="ECO:0007669"/>
    <property type="project" value="UniProtKB-SubCell"/>
</dbReference>
<dbReference type="GO" id="GO:0016151">
    <property type="term" value="F:nickel cation binding"/>
    <property type="evidence" value="ECO:0007669"/>
    <property type="project" value="UniProtKB-UniRule"/>
</dbReference>
<dbReference type="HAMAP" id="MF_01384">
    <property type="entry name" value="UreD"/>
    <property type="match status" value="1"/>
</dbReference>
<dbReference type="InterPro" id="IPR002669">
    <property type="entry name" value="UreD"/>
</dbReference>
<dbReference type="PANTHER" id="PTHR33643">
    <property type="entry name" value="UREASE ACCESSORY PROTEIN D"/>
    <property type="match status" value="1"/>
</dbReference>
<dbReference type="PANTHER" id="PTHR33643:SF1">
    <property type="entry name" value="UREASE ACCESSORY PROTEIN D"/>
    <property type="match status" value="1"/>
</dbReference>
<dbReference type="Pfam" id="PF01774">
    <property type="entry name" value="UreD"/>
    <property type="match status" value="1"/>
</dbReference>
<proteinExistence type="inferred from homology"/>
<protein>
    <recommendedName>
        <fullName evidence="1">Urease accessory protein UreD 3</fullName>
    </recommendedName>
</protein>
<keyword id="KW-0143">Chaperone</keyword>
<keyword id="KW-0963">Cytoplasm</keyword>
<keyword id="KW-0996">Nickel insertion</keyword>